<sequence>MGISMGKSMLVLLTFLAFASCCIAAYRPSETLCGGELVDTLQFVCGDRGFYFSRPASRVSRRSRGIVEECCFRSCDLALLETYCATPAKSERDVSASLAVLPDNFPRYPVGKFFQYDTWRQSTQRLRR</sequence>
<keyword id="KW-0119">Carbohydrate metabolism</keyword>
<keyword id="KW-0165">Cleavage on pair of basic residues</keyword>
<keyword id="KW-1015">Disulfide bond</keyword>
<keyword id="KW-0313">Glucose metabolism</keyword>
<keyword id="KW-0339">Growth factor</keyword>
<keyword id="KW-0372">Hormone</keyword>
<keyword id="KW-0497">Mitogen</keyword>
<keyword id="KW-0892">Osteogenesis</keyword>
<keyword id="KW-1185">Reference proteome</keyword>
<keyword id="KW-0964">Secreted</keyword>
<keyword id="KW-0732">Signal</keyword>
<protein>
    <recommendedName>
        <fullName evidence="2">Insulin-like growth factor 2</fullName>
    </recommendedName>
    <alternativeName>
        <fullName evidence="4">Insulin-like growth factor II</fullName>
        <shortName evidence="4">IGF-II</shortName>
    </alternativeName>
    <alternativeName>
        <fullName>Somatomedin-A</fullName>
    </alternativeName>
    <component>
        <recommendedName>
            <fullName evidence="2">Preptin</fullName>
        </recommendedName>
    </component>
</protein>
<name>IGF2_CAVPO</name>
<evidence type="ECO:0000250" key="1"/>
<evidence type="ECO:0000250" key="2">
    <source>
        <dbReference type="UniProtKB" id="P01344"/>
    </source>
</evidence>
<evidence type="ECO:0000250" key="3">
    <source>
        <dbReference type="UniProtKB" id="P09535"/>
    </source>
</evidence>
<evidence type="ECO:0000303" key="4">
    <source>
    </source>
</evidence>
<evidence type="ECO:0000305" key="5"/>
<feature type="signal peptide" evidence="1">
    <location>
        <begin position="1"/>
        <end position="24"/>
    </location>
</feature>
<feature type="chain" id="PRO_0000015713" description="Insulin-like growth factor 2">
    <location>
        <begin position="25"/>
        <end position="91"/>
    </location>
</feature>
<feature type="propeptide" id="PRO_0000015714" description="E peptide">
    <location>
        <begin position="92"/>
        <end position="128" status="greater than"/>
    </location>
</feature>
<feature type="peptide" id="PRO_0000370374" description="Preptin">
    <location>
        <begin position="93"/>
        <end position="126"/>
    </location>
</feature>
<feature type="region of interest" description="B">
    <location>
        <begin position="25"/>
        <end position="52"/>
    </location>
</feature>
<feature type="region of interest" description="C">
    <location>
        <begin position="53"/>
        <end position="64"/>
    </location>
</feature>
<feature type="region of interest" description="A">
    <location>
        <begin position="65"/>
        <end position="85"/>
    </location>
</feature>
<feature type="region of interest" description="D">
    <location>
        <begin position="86"/>
        <end position="91"/>
    </location>
</feature>
<feature type="site" description="Important for interaction with integrin" evidence="2">
    <location>
        <position position="48"/>
    </location>
</feature>
<feature type="site" description="Important for interaction with integrin" evidence="2">
    <location>
        <position position="58"/>
    </location>
</feature>
<feature type="site" description="Important for interaction with integrin" evidence="2">
    <location>
        <position position="61"/>
    </location>
</feature>
<feature type="site" description="Important for interaction with integrin" evidence="2">
    <location>
        <position position="62"/>
    </location>
</feature>
<feature type="disulfide bond" evidence="1">
    <location>
        <begin position="33"/>
        <end position="71"/>
    </location>
</feature>
<feature type="disulfide bond" evidence="1">
    <location>
        <begin position="45"/>
        <end position="84"/>
    </location>
</feature>
<feature type="disulfide bond" evidence="1">
    <location>
        <begin position="70"/>
        <end position="75"/>
    </location>
</feature>
<feature type="non-terminal residue">
    <location>
        <position position="128"/>
    </location>
</feature>
<organism>
    <name type="scientific">Cavia porcellus</name>
    <name type="common">Guinea pig</name>
    <dbReference type="NCBI Taxonomy" id="10141"/>
    <lineage>
        <taxon>Eukaryota</taxon>
        <taxon>Metazoa</taxon>
        <taxon>Chordata</taxon>
        <taxon>Craniata</taxon>
        <taxon>Vertebrata</taxon>
        <taxon>Euteleostomi</taxon>
        <taxon>Mammalia</taxon>
        <taxon>Eutheria</taxon>
        <taxon>Euarchontoglires</taxon>
        <taxon>Glires</taxon>
        <taxon>Rodentia</taxon>
        <taxon>Hystricomorpha</taxon>
        <taxon>Caviidae</taxon>
        <taxon>Cavia</taxon>
    </lineage>
</organism>
<dbReference type="EMBL" id="S59899">
    <property type="protein sequence ID" value="AAB26479.1"/>
    <property type="molecule type" value="mRNA"/>
</dbReference>
<dbReference type="PIR" id="I57671">
    <property type="entry name" value="I57671"/>
</dbReference>
<dbReference type="BMRB" id="Q08279"/>
<dbReference type="SMR" id="Q08279"/>
<dbReference type="STRING" id="10141.ENSCPOP00000027853"/>
<dbReference type="eggNOG" id="ENOG502S0I0">
    <property type="taxonomic scope" value="Eukaryota"/>
</dbReference>
<dbReference type="HOGENOM" id="CLU_161062_0_0_1"/>
<dbReference type="InParanoid" id="Q08279"/>
<dbReference type="Proteomes" id="UP000005447">
    <property type="component" value="Unassembled WGS sequence"/>
</dbReference>
<dbReference type="GO" id="GO:0005615">
    <property type="term" value="C:extracellular space"/>
    <property type="evidence" value="ECO:0007669"/>
    <property type="project" value="InterPro"/>
</dbReference>
<dbReference type="GO" id="GO:0008083">
    <property type="term" value="F:growth factor activity"/>
    <property type="evidence" value="ECO:0007669"/>
    <property type="project" value="UniProtKB-KW"/>
</dbReference>
<dbReference type="GO" id="GO:0005179">
    <property type="term" value="F:hormone activity"/>
    <property type="evidence" value="ECO:0007669"/>
    <property type="project" value="UniProtKB-KW"/>
</dbReference>
<dbReference type="GO" id="GO:0005159">
    <property type="term" value="F:insulin-like growth factor receptor binding"/>
    <property type="evidence" value="ECO:0007669"/>
    <property type="project" value="TreeGrafter"/>
</dbReference>
<dbReference type="GO" id="GO:0005178">
    <property type="term" value="F:integrin binding"/>
    <property type="evidence" value="ECO:0000250"/>
    <property type="project" value="UniProtKB"/>
</dbReference>
<dbReference type="GO" id="GO:0043539">
    <property type="term" value="F:protein serine/threonine kinase activator activity"/>
    <property type="evidence" value="ECO:0007669"/>
    <property type="project" value="TreeGrafter"/>
</dbReference>
<dbReference type="GO" id="GO:0001892">
    <property type="term" value="P:embryonic placenta development"/>
    <property type="evidence" value="ECO:0000250"/>
    <property type="project" value="UniProtKB"/>
</dbReference>
<dbReference type="GO" id="GO:0060669">
    <property type="term" value="P:embryonic placenta morphogenesis"/>
    <property type="evidence" value="ECO:0000250"/>
    <property type="project" value="UniProtKB"/>
</dbReference>
<dbReference type="GO" id="GO:0006006">
    <property type="term" value="P:glucose metabolic process"/>
    <property type="evidence" value="ECO:0007669"/>
    <property type="project" value="UniProtKB-KW"/>
</dbReference>
<dbReference type="GO" id="GO:0001701">
    <property type="term" value="P:in utero embryonic development"/>
    <property type="evidence" value="ECO:0000250"/>
    <property type="project" value="UniProtKB"/>
</dbReference>
<dbReference type="GO" id="GO:0051148">
    <property type="term" value="P:negative regulation of muscle cell differentiation"/>
    <property type="evidence" value="ECO:0000250"/>
    <property type="project" value="UniProtKB"/>
</dbReference>
<dbReference type="GO" id="GO:0000122">
    <property type="term" value="P:negative regulation of transcription by RNA polymerase II"/>
    <property type="evidence" value="ECO:0000250"/>
    <property type="project" value="UniProtKB"/>
</dbReference>
<dbReference type="GO" id="GO:0001503">
    <property type="term" value="P:ossification"/>
    <property type="evidence" value="ECO:0007669"/>
    <property type="project" value="UniProtKB-KW"/>
</dbReference>
<dbReference type="GO" id="GO:0042104">
    <property type="term" value="P:positive regulation of activated T cell proliferation"/>
    <property type="evidence" value="ECO:0007669"/>
    <property type="project" value="TreeGrafter"/>
</dbReference>
<dbReference type="GO" id="GO:0051781">
    <property type="term" value="P:positive regulation of cell division"/>
    <property type="evidence" value="ECO:0007669"/>
    <property type="project" value="UniProtKB-KW"/>
</dbReference>
<dbReference type="GO" id="GO:0008284">
    <property type="term" value="P:positive regulation of cell population proliferation"/>
    <property type="evidence" value="ECO:0000250"/>
    <property type="project" value="UniProtKB"/>
</dbReference>
<dbReference type="GO" id="GO:0046628">
    <property type="term" value="P:positive regulation of insulin receptor signaling pathway"/>
    <property type="evidence" value="ECO:0007669"/>
    <property type="project" value="TreeGrafter"/>
</dbReference>
<dbReference type="GO" id="GO:0043410">
    <property type="term" value="P:positive regulation of MAPK cascade"/>
    <property type="evidence" value="ECO:0007669"/>
    <property type="project" value="TreeGrafter"/>
</dbReference>
<dbReference type="GO" id="GO:0045944">
    <property type="term" value="P:positive regulation of transcription by RNA polymerase II"/>
    <property type="evidence" value="ECO:0007669"/>
    <property type="project" value="TreeGrafter"/>
</dbReference>
<dbReference type="GO" id="GO:1905564">
    <property type="term" value="P:positive regulation of vascular endothelial cell proliferation"/>
    <property type="evidence" value="ECO:0007669"/>
    <property type="project" value="TreeGrafter"/>
</dbReference>
<dbReference type="GO" id="GO:0051147">
    <property type="term" value="P:regulation of muscle cell differentiation"/>
    <property type="evidence" value="ECO:0000250"/>
    <property type="project" value="UniProtKB"/>
</dbReference>
<dbReference type="CDD" id="cd04368">
    <property type="entry name" value="IlGF"/>
    <property type="match status" value="1"/>
</dbReference>
<dbReference type="FunFam" id="1.10.100.10:FF:000002">
    <property type="entry name" value="Insulin-like growth factor II preproprotein"/>
    <property type="match status" value="1"/>
</dbReference>
<dbReference type="Gene3D" id="1.10.100.10">
    <property type="entry name" value="Insulin-like"/>
    <property type="match status" value="1"/>
</dbReference>
<dbReference type="InterPro" id="IPR022334">
    <property type="entry name" value="IGF2"/>
</dbReference>
<dbReference type="InterPro" id="IPR016179">
    <property type="entry name" value="Insulin-like"/>
</dbReference>
<dbReference type="InterPro" id="IPR022350">
    <property type="entry name" value="Insulin-like_growth_factor"/>
</dbReference>
<dbReference type="InterPro" id="IPR036438">
    <property type="entry name" value="Insulin-like_sf"/>
</dbReference>
<dbReference type="InterPro" id="IPR022353">
    <property type="entry name" value="Insulin_CS"/>
</dbReference>
<dbReference type="InterPro" id="IPR022352">
    <property type="entry name" value="Insulin_family"/>
</dbReference>
<dbReference type="PANTHER" id="PTHR46886">
    <property type="entry name" value="INSULIN-LIKE GROWTH FACTOR II"/>
    <property type="match status" value="1"/>
</dbReference>
<dbReference type="PANTHER" id="PTHR46886:SF1">
    <property type="entry name" value="INSULIN-LIKE GROWTH FACTOR II"/>
    <property type="match status" value="1"/>
</dbReference>
<dbReference type="Pfam" id="PF00049">
    <property type="entry name" value="Insulin"/>
    <property type="match status" value="1"/>
</dbReference>
<dbReference type="PRINTS" id="PR02002">
    <property type="entry name" value="INSLNLIKEGF"/>
</dbReference>
<dbReference type="PRINTS" id="PR02006">
    <property type="entry name" value="INSLNLIKEGF2"/>
</dbReference>
<dbReference type="PRINTS" id="PR00276">
    <property type="entry name" value="INSULINFAMLY"/>
</dbReference>
<dbReference type="SMART" id="SM00078">
    <property type="entry name" value="IlGF"/>
    <property type="match status" value="1"/>
</dbReference>
<dbReference type="SUPFAM" id="SSF56994">
    <property type="entry name" value="Insulin-like"/>
    <property type="match status" value="1"/>
</dbReference>
<dbReference type="PROSITE" id="PS00262">
    <property type="entry name" value="INSULIN"/>
    <property type="match status" value="1"/>
</dbReference>
<proteinExistence type="evidence at transcript level"/>
<comment type="function">
    <text evidence="2 3">The insulin-like growth factors possess growth-promoting activity (By similarity). Major fetal growth hormone in mammals. Plays a key role in regulating fetoplacental development. IGF2 is influenced by placental lactogen. Also involved in tissue differentiation. In adults, involved in glucose metabolism in adipose tissue, skeletal muscle and liver. Acts as a ligand for integrin which is required for IGF2 signaling. Positively regulates myogenic transcription factor MYOD1 function by facilitating the recruitment of transcriptional coactivators, thereby controlling muscle terminal differentiation (By similarity). Inhibits myoblast differentiation and metabolism via increasing the mitochondrial respiration rate (By similarity).</text>
</comment>
<comment type="function">
    <text evidence="2 3">Preptin undergoes glucose-mediated co-secretion with insulin, and acts as a physiological amplifier of glucose-mediated insulin secretion. Exhibits osteogenic properties by increasing osteoblast mitogenic activity through phosphoactivation of MAPK1 and MAPK3.</text>
</comment>
<comment type="subunit">
    <text evidence="2 3">Interacts with MYORG; this interaction is required for IGF2 secretion. Interacts with integrins ITGAV:ITGB3 and ITGA6:ITGB4; integrin-binding is required for IGF2 signaling.</text>
</comment>
<comment type="subcellular location">
    <subcellularLocation>
        <location evidence="2 3">Secreted</location>
    </subcellularLocation>
</comment>
<comment type="developmental stage">
    <text>Expressed predominantly in fetal tissues and at lower levels in adult.</text>
</comment>
<comment type="PTM">
    <text evidence="2">Proteolytically processed by PCSK4, proIGF2 is cleaved at Arg-128 and Arg-92 to generate big-IGF2 and mature IGF2.</text>
</comment>
<comment type="miscellaneous">
    <text evidence="3">The IGF2 locus is imprinted. Paternal inherited gene is expressed, while the maternal inherited gene is imprinted, hence silenced.</text>
</comment>
<comment type="similarity">
    <text evidence="5">Belongs to the insulin family.</text>
</comment>
<gene>
    <name evidence="2" type="primary">IGF2</name>
    <name evidence="5" type="synonym">IGF-2</name>
</gene>
<accession>Q08279</accession>
<reference key="1">
    <citation type="journal article" date="1992" name="Mol. Cell. Endocrinol.">
        <title>Isolation of an insulin-like growth factor II cDNA from guinea pig liver: expression and developmental regulation.</title>
        <authorList>
            <person name="Levinovitz A."/>
            <person name="Norstedt G."/>
            <person name="van den Berg S."/>
            <person name="Robinson I.C.A.F."/>
            <person name="Ekstroem T.J."/>
        </authorList>
    </citation>
    <scope>NUCLEOTIDE SEQUENCE [MRNA]</scope>
    <source>
        <strain>Hartley</strain>
        <tissue>Liver</tissue>
    </source>
</reference>